<evidence type="ECO:0000250" key="1"/>
<evidence type="ECO:0000250" key="2">
    <source>
        <dbReference type="UniProtKB" id="P27140"/>
    </source>
</evidence>
<evidence type="ECO:0000250" key="3">
    <source>
        <dbReference type="UniProtKB" id="P42737"/>
    </source>
</evidence>
<evidence type="ECO:0000255" key="4"/>
<evidence type="ECO:0000269" key="5">
    <source>
    </source>
</evidence>
<evidence type="ECO:0000269" key="6">
    <source>
    </source>
</evidence>
<evidence type="ECO:0000303" key="7">
    <source>
    </source>
</evidence>
<evidence type="ECO:0000303" key="8">
    <source>
    </source>
</evidence>
<evidence type="ECO:0000305" key="9"/>
<dbReference type="EC" id="4.2.1.1"/>
<dbReference type="EMBL" id="AC079131">
    <property type="protein sequence ID" value="AAG50771.1"/>
    <property type="status" value="ALT_SEQ"/>
    <property type="molecule type" value="Genomic_DNA"/>
</dbReference>
<dbReference type="EMBL" id="AC079604">
    <property type="protein sequence ID" value="AAG50705.1"/>
    <property type="molecule type" value="Genomic_DNA"/>
</dbReference>
<dbReference type="EMBL" id="CP002684">
    <property type="protein sequence ID" value="AEE33506.1"/>
    <property type="molecule type" value="Genomic_DNA"/>
</dbReference>
<dbReference type="EMBL" id="CP002684">
    <property type="protein sequence ID" value="AEE33507.1"/>
    <property type="molecule type" value="Genomic_DNA"/>
</dbReference>
<dbReference type="EMBL" id="CP002684">
    <property type="protein sequence ID" value="AEE33508.1"/>
    <property type="molecule type" value="Genomic_DNA"/>
</dbReference>
<dbReference type="EMBL" id="CP002684">
    <property type="protein sequence ID" value="AEE33509.1"/>
    <property type="molecule type" value="Genomic_DNA"/>
</dbReference>
<dbReference type="EMBL" id="CP002684">
    <property type="protein sequence ID" value="ANM58255.1"/>
    <property type="molecule type" value="Genomic_DNA"/>
</dbReference>
<dbReference type="EMBL" id="CP002684">
    <property type="protein sequence ID" value="ANM58256.1"/>
    <property type="molecule type" value="Genomic_DNA"/>
</dbReference>
<dbReference type="EMBL" id="AY120772">
    <property type="protein sequence ID" value="AAM53330.1"/>
    <property type="molecule type" value="mRNA"/>
</dbReference>
<dbReference type="EMBL" id="BT000145">
    <property type="protein sequence ID" value="AAN15464.1"/>
    <property type="molecule type" value="mRNA"/>
</dbReference>
<dbReference type="EMBL" id="AK316811">
    <property type="protein sequence ID" value="BAH19525.1"/>
    <property type="molecule type" value="mRNA"/>
</dbReference>
<dbReference type="PIR" id="B96615">
    <property type="entry name" value="B96615"/>
</dbReference>
<dbReference type="RefSeq" id="NP_001031206.1">
    <molecule id="Q9C6F5-3"/>
    <property type="nucleotide sequence ID" value="NM_001036129.3"/>
</dbReference>
<dbReference type="RefSeq" id="NP_001185259.1">
    <molecule id="Q9C6F5-1"/>
    <property type="nucleotide sequence ID" value="NM_001198330.1"/>
</dbReference>
<dbReference type="RefSeq" id="NP_001320704.1">
    <molecule id="Q9C6F5-3"/>
    <property type="nucleotide sequence ID" value="NM_001333818.1"/>
</dbReference>
<dbReference type="RefSeq" id="NP_001320705.1">
    <molecule id="Q9C6F5-3"/>
    <property type="nucleotide sequence ID" value="NM_001333817.1"/>
</dbReference>
<dbReference type="RefSeq" id="NP_176114.2">
    <molecule id="Q9C6F5-1"/>
    <property type="nucleotide sequence ID" value="NM_104599.5"/>
</dbReference>
<dbReference type="RefSeq" id="NP_849823.1">
    <molecule id="Q9C6F5-2"/>
    <property type="nucleotide sequence ID" value="NM_179492.4"/>
</dbReference>
<dbReference type="SMR" id="Q9C6F5"/>
<dbReference type="FunCoup" id="Q9C6F5">
    <property type="interactions" value="805"/>
</dbReference>
<dbReference type="STRING" id="3702.Q9C6F5"/>
<dbReference type="PaxDb" id="3702-AT1G58180.2"/>
<dbReference type="ProteomicsDB" id="240646">
    <molecule id="Q9C6F5-1"/>
</dbReference>
<dbReference type="EnsemblPlants" id="AT1G58180.1">
    <molecule id="Q9C6F5-2"/>
    <property type="protein sequence ID" value="AT1G58180.1"/>
    <property type="gene ID" value="AT1G58180"/>
</dbReference>
<dbReference type="EnsemblPlants" id="AT1G58180.2">
    <molecule id="Q9C6F5-1"/>
    <property type="protein sequence ID" value="AT1G58180.2"/>
    <property type="gene ID" value="AT1G58180"/>
</dbReference>
<dbReference type="EnsemblPlants" id="AT1G58180.3">
    <molecule id="Q9C6F5-3"/>
    <property type="protein sequence ID" value="AT1G58180.3"/>
    <property type="gene ID" value="AT1G58180"/>
</dbReference>
<dbReference type="EnsemblPlants" id="AT1G58180.4">
    <molecule id="Q9C6F5-1"/>
    <property type="protein sequence ID" value="AT1G58180.4"/>
    <property type="gene ID" value="AT1G58180"/>
</dbReference>
<dbReference type="EnsemblPlants" id="AT1G58180.6">
    <molecule id="Q9C6F5-3"/>
    <property type="protein sequence ID" value="AT1G58180.6"/>
    <property type="gene ID" value="AT1G58180"/>
</dbReference>
<dbReference type="EnsemblPlants" id="AT1G58180.7">
    <molecule id="Q9C6F5-3"/>
    <property type="protein sequence ID" value="AT1G58180.7"/>
    <property type="gene ID" value="AT1G58180"/>
</dbReference>
<dbReference type="GeneID" id="842185"/>
<dbReference type="Gramene" id="AT1G58180.1">
    <molecule id="Q9C6F5-2"/>
    <property type="protein sequence ID" value="AT1G58180.1"/>
    <property type="gene ID" value="AT1G58180"/>
</dbReference>
<dbReference type="Gramene" id="AT1G58180.2">
    <molecule id="Q9C6F5-1"/>
    <property type="protein sequence ID" value="AT1G58180.2"/>
    <property type="gene ID" value="AT1G58180"/>
</dbReference>
<dbReference type="Gramene" id="AT1G58180.3">
    <molecule id="Q9C6F5-3"/>
    <property type="protein sequence ID" value="AT1G58180.3"/>
    <property type="gene ID" value="AT1G58180"/>
</dbReference>
<dbReference type="Gramene" id="AT1G58180.4">
    <molecule id="Q9C6F5-1"/>
    <property type="protein sequence ID" value="AT1G58180.4"/>
    <property type="gene ID" value="AT1G58180"/>
</dbReference>
<dbReference type="Gramene" id="AT1G58180.6">
    <molecule id="Q9C6F5-3"/>
    <property type="protein sequence ID" value="AT1G58180.6"/>
    <property type="gene ID" value="AT1G58180"/>
</dbReference>
<dbReference type="Gramene" id="AT1G58180.7">
    <molecule id="Q9C6F5-3"/>
    <property type="protein sequence ID" value="AT1G58180.7"/>
    <property type="gene ID" value="AT1G58180"/>
</dbReference>
<dbReference type="KEGG" id="ath:AT1G58180"/>
<dbReference type="Araport" id="AT1G58180"/>
<dbReference type="TAIR" id="AT1G58180">
    <property type="gene designation" value="BCA6"/>
</dbReference>
<dbReference type="eggNOG" id="KOG1578">
    <property type="taxonomic scope" value="Eukaryota"/>
</dbReference>
<dbReference type="InParanoid" id="Q9C6F5"/>
<dbReference type="OMA" id="FMQENRD"/>
<dbReference type="PhylomeDB" id="Q9C6F5"/>
<dbReference type="BioCyc" id="ARA:AT1G58180-MONOMER"/>
<dbReference type="PRO" id="PR:Q9C6F5"/>
<dbReference type="Proteomes" id="UP000006548">
    <property type="component" value="Chromosome 1"/>
</dbReference>
<dbReference type="ExpressionAtlas" id="Q9C6F5">
    <property type="expression patterns" value="baseline and differential"/>
</dbReference>
<dbReference type="GO" id="GO:0005739">
    <property type="term" value="C:mitochondrion"/>
    <property type="evidence" value="ECO:0000314"/>
    <property type="project" value="TAIR"/>
</dbReference>
<dbReference type="GO" id="GO:0004089">
    <property type="term" value="F:carbonate dehydratase activity"/>
    <property type="evidence" value="ECO:0007669"/>
    <property type="project" value="UniProtKB-EC"/>
</dbReference>
<dbReference type="GO" id="GO:0008270">
    <property type="term" value="F:zinc ion binding"/>
    <property type="evidence" value="ECO:0007669"/>
    <property type="project" value="InterPro"/>
</dbReference>
<dbReference type="GO" id="GO:0015976">
    <property type="term" value="P:carbon utilization"/>
    <property type="evidence" value="ECO:0007669"/>
    <property type="project" value="InterPro"/>
</dbReference>
<dbReference type="CDD" id="cd00884">
    <property type="entry name" value="beta_CA_cladeB"/>
    <property type="match status" value="1"/>
</dbReference>
<dbReference type="FunFam" id="3.40.1050.10:FF:000003">
    <property type="entry name" value="Carbonic anhydrase"/>
    <property type="match status" value="1"/>
</dbReference>
<dbReference type="Gene3D" id="3.40.1050.10">
    <property type="entry name" value="Carbonic anhydrase"/>
    <property type="match status" value="1"/>
</dbReference>
<dbReference type="InterPro" id="IPR045066">
    <property type="entry name" value="Beta_CA_cladeB"/>
</dbReference>
<dbReference type="InterPro" id="IPR001765">
    <property type="entry name" value="Carbonic_anhydrase"/>
</dbReference>
<dbReference type="InterPro" id="IPR015892">
    <property type="entry name" value="Carbonic_anhydrase_CS"/>
</dbReference>
<dbReference type="InterPro" id="IPR036874">
    <property type="entry name" value="Carbonic_anhydrase_sf"/>
</dbReference>
<dbReference type="PANTHER" id="PTHR11002:SF19">
    <property type="entry name" value="BETA CARBONIC ANHYDRASE 6, MITOCHONDRIAL"/>
    <property type="match status" value="1"/>
</dbReference>
<dbReference type="PANTHER" id="PTHR11002">
    <property type="entry name" value="CARBONIC ANHYDRASE"/>
    <property type="match status" value="1"/>
</dbReference>
<dbReference type="Pfam" id="PF00484">
    <property type="entry name" value="Pro_CA"/>
    <property type="match status" value="1"/>
</dbReference>
<dbReference type="SMART" id="SM00947">
    <property type="entry name" value="Pro_CA"/>
    <property type="match status" value="1"/>
</dbReference>
<dbReference type="SUPFAM" id="SSF53056">
    <property type="entry name" value="beta-carbonic anhydrase, cab"/>
    <property type="match status" value="1"/>
</dbReference>
<dbReference type="PROSITE" id="PS00704">
    <property type="entry name" value="PROK_CO2_ANHYDRASE_1"/>
    <property type="match status" value="1"/>
</dbReference>
<dbReference type="PROSITE" id="PS00705">
    <property type="entry name" value="PROK_CO2_ANHYDRASE_2"/>
    <property type="match status" value="1"/>
</dbReference>
<gene>
    <name type="primary">BCA6</name>
    <name type="ordered locus">At1g58180</name>
    <name type="ORF">T15M6.18</name>
    <name type="ORF">T18I24.9</name>
</gene>
<keyword id="KW-0025">Alternative splicing</keyword>
<keyword id="KW-0456">Lyase</keyword>
<keyword id="KW-0496">Mitochondrion</keyword>
<keyword id="KW-0597">Phosphoprotein</keyword>
<keyword id="KW-1185">Reference proteome</keyword>
<keyword id="KW-0702">S-nitrosylation</keyword>
<keyword id="KW-0809">Transit peptide</keyword>
<keyword id="KW-0862">Zinc</keyword>
<name>BCA6_ARATH</name>
<accession>Q9C6F5</accession>
<accession>B9DFK8</accession>
<accession>F4I9R8</accession>
<accession>Q8L833</accession>
<accession>Q9C6R2</accession>
<sequence>MAFTLGGRARRLVSATSVHQNGCLHKLQQIGSDRFQLGEAKAIRLLPRRTNMVQELGIREEFMDLNRETETSYDFLDEMRHRFLKFKRQKYLPEIEKFKALAIAQSPKVMVIGCADSRVCPSYVLGFQPGEAFTIRNVANLVTPVQNGPTETNSALEFAVTTLQVENIIVMGHSNCGGIAALMSHQNHQGQHSSLVERWVMNGKAAKLRTQLASSHLSFDEQCRNCEKESIKDSVMNLITYSWIRDRVKRGEVKIHGCYYNLSDCSLEKWRLSSDKTNYGFYISDREIWS</sequence>
<reference key="1">
    <citation type="journal article" date="2000" name="Nature">
        <title>Sequence and analysis of chromosome 1 of the plant Arabidopsis thaliana.</title>
        <authorList>
            <person name="Theologis A."/>
            <person name="Ecker J.R."/>
            <person name="Palm C.J."/>
            <person name="Federspiel N.A."/>
            <person name="Kaul S."/>
            <person name="White O."/>
            <person name="Alonso J."/>
            <person name="Altafi H."/>
            <person name="Araujo R."/>
            <person name="Bowman C.L."/>
            <person name="Brooks S.Y."/>
            <person name="Buehler E."/>
            <person name="Chan A."/>
            <person name="Chao Q."/>
            <person name="Chen H."/>
            <person name="Cheuk R.F."/>
            <person name="Chin C.W."/>
            <person name="Chung M.K."/>
            <person name="Conn L."/>
            <person name="Conway A.B."/>
            <person name="Conway A.R."/>
            <person name="Creasy T.H."/>
            <person name="Dewar K."/>
            <person name="Dunn P."/>
            <person name="Etgu P."/>
            <person name="Feldblyum T.V."/>
            <person name="Feng J.-D."/>
            <person name="Fong B."/>
            <person name="Fujii C.Y."/>
            <person name="Gill J.E."/>
            <person name="Goldsmith A.D."/>
            <person name="Haas B."/>
            <person name="Hansen N.F."/>
            <person name="Hughes B."/>
            <person name="Huizar L."/>
            <person name="Hunter J.L."/>
            <person name="Jenkins J."/>
            <person name="Johnson-Hopson C."/>
            <person name="Khan S."/>
            <person name="Khaykin E."/>
            <person name="Kim C.J."/>
            <person name="Koo H.L."/>
            <person name="Kremenetskaia I."/>
            <person name="Kurtz D.B."/>
            <person name="Kwan A."/>
            <person name="Lam B."/>
            <person name="Langin-Hooper S."/>
            <person name="Lee A."/>
            <person name="Lee J.M."/>
            <person name="Lenz C.A."/>
            <person name="Li J.H."/>
            <person name="Li Y.-P."/>
            <person name="Lin X."/>
            <person name="Liu S.X."/>
            <person name="Liu Z.A."/>
            <person name="Luros J.S."/>
            <person name="Maiti R."/>
            <person name="Marziali A."/>
            <person name="Militscher J."/>
            <person name="Miranda M."/>
            <person name="Nguyen M."/>
            <person name="Nierman W.C."/>
            <person name="Osborne B.I."/>
            <person name="Pai G."/>
            <person name="Peterson J."/>
            <person name="Pham P.K."/>
            <person name="Rizzo M."/>
            <person name="Rooney T."/>
            <person name="Rowley D."/>
            <person name="Sakano H."/>
            <person name="Salzberg S.L."/>
            <person name="Schwartz J.R."/>
            <person name="Shinn P."/>
            <person name="Southwick A.M."/>
            <person name="Sun H."/>
            <person name="Tallon L.J."/>
            <person name="Tambunga G."/>
            <person name="Toriumi M.J."/>
            <person name="Town C.D."/>
            <person name="Utterback T."/>
            <person name="Van Aken S."/>
            <person name="Vaysberg M."/>
            <person name="Vysotskaia V.S."/>
            <person name="Walker M."/>
            <person name="Wu D."/>
            <person name="Yu G."/>
            <person name="Fraser C.M."/>
            <person name="Venter J.C."/>
            <person name="Davis R.W."/>
        </authorList>
    </citation>
    <scope>NUCLEOTIDE SEQUENCE [LARGE SCALE GENOMIC DNA]</scope>
    <source>
        <strain>cv. Columbia</strain>
    </source>
</reference>
<reference key="2">
    <citation type="journal article" date="2017" name="Plant J.">
        <title>Araport11: a complete reannotation of the Arabidopsis thaliana reference genome.</title>
        <authorList>
            <person name="Cheng C.Y."/>
            <person name="Krishnakumar V."/>
            <person name="Chan A.P."/>
            <person name="Thibaud-Nissen F."/>
            <person name="Schobel S."/>
            <person name="Town C.D."/>
        </authorList>
    </citation>
    <scope>GENOME REANNOTATION</scope>
    <source>
        <strain>cv. Columbia</strain>
    </source>
</reference>
<reference key="3">
    <citation type="journal article" date="2003" name="Science">
        <title>Empirical analysis of transcriptional activity in the Arabidopsis genome.</title>
        <authorList>
            <person name="Yamada K."/>
            <person name="Lim J."/>
            <person name="Dale J.M."/>
            <person name="Chen H."/>
            <person name="Shinn P."/>
            <person name="Palm C.J."/>
            <person name="Southwick A.M."/>
            <person name="Wu H.C."/>
            <person name="Kim C.J."/>
            <person name="Nguyen M."/>
            <person name="Pham P.K."/>
            <person name="Cheuk R.F."/>
            <person name="Karlin-Newmann G."/>
            <person name="Liu S.X."/>
            <person name="Lam B."/>
            <person name="Sakano H."/>
            <person name="Wu T."/>
            <person name="Yu G."/>
            <person name="Miranda M."/>
            <person name="Quach H.L."/>
            <person name="Tripp M."/>
            <person name="Chang C.H."/>
            <person name="Lee J.M."/>
            <person name="Toriumi M.J."/>
            <person name="Chan M.M."/>
            <person name="Tang C.C."/>
            <person name="Onodera C.S."/>
            <person name="Deng J.M."/>
            <person name="Akiyama K."/>
            <person name="Ansari Y."/>
            <person name="Arakawa T."/>
            <person name="Banh J."/>
            <person name="Banno F."/>
            <person name="Bowser L."/>
            <person name="Brooks S.Y."/>
            <person name="Carninci P."/>
            <person name="Chao Q."/>
            <person name="Choy N."/>
            <person name="Enju A."/>
            <person name="Goldsmith A.D."/>
            <person name="Gurjal M."/>
            <person name="Hansen N.F."/>
            <person name="Hayashizaki Y."/>
            <person name="Johnson-Hopson C."/>
            <person name="Hsuan V.W."/>
            <person name="Iida K."/>
            <person name="Karnes M."/>
            <person name="Khan S."/>
            <person name="Koesema E."/>
            <person name="Ishida J."/>
            <person name="Jiang P.X."/>
            <person name="Jones T."/>
            <person name="Kawai J."/>
            <person name="Kamiya A."/>
            <person name="Meyers C."/>
            <person name="Nakajima M."/>
            <person name="Narusaka M."/>
            <person name="Seki M."/>
            <person name="Sakurai T."/>
            <person name="Satou M."/>
            <person name="Tamse R."/>
            <person name="Vaysberg M."/>
            <person name="Wallender E.K."/>
            <person name="Wong C."/>
            <person name="Yamamura Y."/>
            <person name="Yuan S."/>
            <person name="Shinozaki K."/>
            <person name="Davis R.W."/>
            <person name="Theologis A."/>
            <person name="Ecker J.R."/>
        </authorList>
    </citation>
    <scope>NUCLEOTIDE SEQUENCE [LARGE SCALE MRNA] (ISOFORM 2)</scope>
    <source>
        <strain>cv. Columbia</strain>
    </source>
</reference>
<reference key="4">
    <citation type="journal article" date="2009" name="DNA Res.">
        <title>Analysis of multiple occurrences of alternative splicing events in Arabidopsis thaliana using novel sequenced full-length cDNAs.</title>
        <authorList>
            <person name="Iida K."/>
            <person name="Fukami-Kobayashi K."/>
            <person name="Toyoda A."/>
            <person name="Sakaki Y."/>
            <person name="Kobayashi M."/>
            <person name="Seki M."/>
            <person name="Shinozaki K."/>
        </authorList>
    </citation>
    <scope>NUCLEOTIDE SEQUENCE [LARGE SCALE MRNA] (ISOFORM 3)</scope>
    <source>
        <strain>cv. Columbia</strain>
        <tissue>Rosette leaf</tissue>
    </source>
</reference>
<reference key="5">
    <citation type="journal article" date="2007" name="Plant Cell Environ.">
        <title>Characterization and expression analysis of genes encoding alpha and beta carbonic anhydrases in Arabidopsis.</title>
        <authorList>
            <person name="Fabre N."/>
            <person name="Reiter I.M."/>
            <person name="Becuwe-Linka N."/>
            <person name="Genty B."/>
            <person name="Rumeau D."/>
        </authorList>
    </citation>
    <scope>TISSUE SPECIFICITY</scope>
    <scope>SUBCELLULAR LOCATION</scope>
    <scope>GENE FAMILY</scope>
    <scope>NOMENCLATURE</scope>
    <source>
        <strain>cv. Columbia</strain>
    </source>
</reference>
<reference key="6">
    <citation type="journal article" date="2010" name="Nat. Cell Biol.">
        <title>Carbonic anhydrases are upstream regulators of CO2-controlled stomatal movements in guard cells.</title>
        <authorList>
            <person name="Hu H."/>
            <person name="Boisson-Dernier A."/>
            <person name="Israelsson-Nordstrom M."/>
            <person name="Bohmer M."/>
            <person name="Xue S."/>
            <person name="Ries A."/>
            <person name="Godoski J."/>
            <person name="Kuhn J.M."/>
            <person name="Schroeder J.I."/>
        </authorList>
    </citation>
    <scope>TISSUE SPECIFICITY</scope>
</reference>
<comment type="function">
    <text evidence="1">Reversible hydration of carbon dioxide.</text>
</comment>
<comment type="catalytic activity">
    <reaction>
        <text>hydrogencarbonate + H(+) = CO2 + H2O</text>
        <dbReference type="Rhea" id="RHEA:10748"/>
        <dbReference type="ChEBI" id="CHEBI:15377"/>
        <dbReference type="ChEBI" id="CHEBI:15378"/>
        <dbReference type="ChEBI" id="CHEBI:16526"/>
        <dbReference type="ChEBI" id="CHEBI:17544"/>
        <dbReference type="EC" id="4.2.1.1"/>
    </reaction>
</comment>
<comment type="subcellular location">
    <subcellularLocation>
        <location evidence="5">Mitochondrion</location>
    </subcellularLocation>
</comment>
<comment type="alternative products">
    <event type="alternative splicing"/>
    <isoform>
        <id>Q9C6F5-1</id>
        <name>1</name>
        <sequence type="displayed"/>
    </isoform>
    <isoform>
        <id>Q9C6F5-2</id>
        <name>2</name>
        <sequence type="described" ref="VSP_055074"/>
    </isoform>
    <isoform>
        <id>Q9C6F5-3</id>
        <name>3</name>
        <sequence type="described" ref="VSP_055073"/>
    </isoform>
</comment>
<comment type="tissue specificity">
    <text evidence="5 6">Strongly expressed in aerial tissues including leaves, stems, flowers and siliques, and, to a lower extent, in roots. Accumulates in guard cells.</text>
</comment>
<comment type="similarity">
    <text evidence="9">Belongs to the beta-class carbonic anhydrase family.</text>
</comment>
<comment type="sequence caution" evidence="9">
    <conflict type="erroneous gene model prediction">
        <sequence resource="EMBL-CDS" id="AAG50771"/>
    </conflict>
</comment>
<organism>
    <name type="scientific">Arabidopsis thaliana</name>
    <name type="common">Mouse-ear cress</name>
    <dbReference type="NCBI Taxonomy" id="3702"/>
    <lineage>
        <taxon>Eukaryota</taxon>
        <taxon>Viridiplantae</taxon>
        <taxon>Streptophyta</taxon>
        <taxon>Embryophyta</taxon>
        <taxon>Tracheophyta</taxon>
        <taxon>Spermatophyta</taxon>
        <taxon>Magnoliopsida</taxon>
        <taxon>eudicotyledons</taxon>
        <taxon>Gunneridae</taxon>
        <taxon>Pentapetalae</taxon>
        <taxon>rosids</taxon>
        <taxon>malvids</taxon>
        <taxon>Brassicales</taxon>
        <taxon>Brassicaceae</taxon>
        <taxon>Camelineae</taxon>
        <taxon>Arabidopsis</taxon>
    </lineage>
</organism>
<proteinExistence type="evidence at transcript level"/>
<feature type="transit peptide" description="Mitochondrion" evidence="4">
    <location>
        <begin position="1"/>
        <end position="20"/>
    </location>
</feature>
<feature type="chain" id="PRO_0000429738" description="Beta carbonic anhydrase 6, mitochondrial">
    <location>
        <begin position="21"/>
        <end position="290"/>
    </location>
</feature>
<feature type="modified residue" description="Phosphoserine" evidence="3">
    <location>
        <position position="122"/>
    </location>
</feature>
<feature type="modified residue" description="S-nitrosocysteine" evidence="2">
    <location>
        <position position="226"/>
    </location>
</feature>
<feature type="splice variant" id="VSP_055073" description="In isoform 3." evidence="8">
    <location>
        <begin position="1"/>
        <end position="51"/>
    </location>
</feature>
<feature type="splice variant" id="VSP_055074" description="In isoform 2." evidence="7">
    <location>
        <begin position="251"/>
        <end position="284"/>
    </location>
</feature>
<feature type="sequence conflict" description="In Ref. 3; AAM53330/AAN15464." evidence="9" ref="3">
    <location>
        <position position="38"/>
    </location>
</feature>
<protein>
    <recommendedName>
        <fullName>Beta carbonic anhydrase 6, mitochondrial</fullName>
        <shortName>AtbCA6</shortName>
        <shortName>AtbetaCA6</shortName>
        <ecNumber>4.2.1.1</ecNumber>
    </recommendedName>
    <alternativeName>
        <fullName>Beta carbonate dehydratase 6</fullName>
    </alternativeName>
</protein>